<name>RBSD_SHISS</name>
<protein>
    <recommendedName>
        <fullName evidence="1">D-ribose pyranase</fullName>
        <ecNumber evidence="1">5.4.99.62</ecNumber>
    </recommendedName>
</protein>
<gene>
    <name evidence="1" type="primary">rbsD</name>
    <name type="ordered locus">SSON_3918</name>
</gene>
<organism>
    <name type="scientific">Shigella sonnei (strain Ss046)</name>
    <dbReference type="NCBI Taxonomy" id="300269"/>
    <lineage>
        <taxon>Bacteria</taxon>
        <taxon>Pseudomonadati</taxon>
        <taxon>Pseudomonadota</taxon>
        <taxon>Gammaproteobacteria</taxon>
        <taxon>Enterobacterales</taxon>
        <taxon>Enterobacteriaceae</taxon>
        <taxon>Shigella</taxon>
    </lineage>
</organism>
<proteinExistence type="inferred from homology"/>
<dbReference type="EC" id="5.4.99.62" evidence="1"/>
<dbReference type="EMBL" id="CP000038">
    <property type="protein sequence ID" value="AAZ90453.1"/>
    <property type="status" value="ALT_INIT"/>
    <property type="molecule type" value="Genomic_DNA"/>
</dbReference>
<dbReference type="RefSeq" id="WP_000715936.1">
    <property type="nucleotide sequence ID" value="NC_007384.1"/>
</dbReference>
<dbReference type="SMR" id="Q3YVK9"/>
<dbReference type="GeneID" id="93778201"/>
<dbReference type="KEGG" id="ssn:SSON_3918"/>
<dbReference type="HOGENOM" id="CLU_135498_0_0_6"/>
<dbReference type="UniPathway" id="UPA00916">
    <property type="reaction ID" value="UER00888"/>
</dbReference>
<dbReference type="Proteomes" id="UP000002529">
    <property type="component" value="Chromosome"/>
</dbReference>
<dbReference type="GO" id="GO:0005829">
    <property type="term" value="C:cytosol"/>
    <property type="evidence" value="ECO:0007669"/>
    <property type="project" value="TreeGrafter"/>
</dbReference>
<dbReference type="GO" id="GO:0062193">
    <property type="term" value="F:D-ribose pyranase activity"/>
    <property type="evidence" value="ECO:0007669"/>
    <property type="project" value="UniProtKB-EC"/>
</dbReference>
<dbReference type="GO" id="GO:0016872">
    <property type="term" value="F:intramolecular lyase activity"/>
    <property type="evidence" value="ECO:0007669"/>
    <property type="project" value="UniProtKB-UniRule"/>
</dbReference>
<dbReference type="GO" id="GO:0048029">
    <property type="term" value="F:monosaccharide binding"/>
    <property type="evidence" value="ECO:0007669"/>
    <property type="project" value="InterPro"/>
</dbReference>
<dbReference type="GO" id="GO:0019303">
    <property type="term" value="P:D-ribose catabolic process"/>
    <property type="evidence" value="ECO:0007669"/>
    <property type="project" value="UniProtKB-UniRule"/>
</dbReference>
<dbReference type="FunFam" id="3.40.1650.10:FF:000002">
    <property type="entry name" value="D-ribose pyranase"/>
    <property type="match status" value="1"/>
</dbReference>
<dbReference type="Gene3D" id="3.40.1650.10">
    <property type="entry name" value="RbsD-like domain"/>
    <property type="match status" value="1"/>
</dbReference>
<dbReference type="HAMAP" id="MF_01661">
    <property type="entry name" value="D_rib_pyranase"/>
    <property type="match status" value="1"/>
</dbReference>
<dbReference type="InterPro" id="IPR023064">
    <property type="entry name" value="D-ribose_pyranase"/>
</dbReference>
<dbReference type="InterPro" id="IPR023750">
    <property type="entry name" value="RbsD-like_sf"/>
</dbReference>
<dbReference type="InterPro" id="IPR007721">
    <property type="entry name" value="RbsD_FucU"/>
</dbReference>
<dbReference type="NCBIfam" id="NF008761">
    <property type="entry name" value="PRK11797.1"/>
    <property type="match status" value="1"/>
</dbReference>
<dbReference type="PANTHER" id="PTHR37831">
    <property type="entry name" value="D-RIBOSE PYRANASE"/>
    <property type="match status" value="1"/>
</dbReference>
<dbReference type="PANTHER" id="PTHR37831:SF1">
    <property type="entry name" value="D-RIBOSE PYRANASE"/>
    <property type="match status" value="1"/>
</dbReference>
<dbReference type="Pfam" id="PF05025">
    <property type="entry name" value="RbsD_FucU"/>
    <property type="match status" value="1"/>
</dbReference>
<dbReference type="SUPFAM" id="SSF102546">
    <property type="entry name" value="RbsD-like"/>
    <property type="match status" value="1"/>
</dbReference>
<sequence length="139" mass="15283">MKKGTVLNSDISSVISRLGHTDTLVVCDAGLPIPKSTTRIDMALTQGVPSFMQVLGVVTNEMQVEAAIIAEEIKQHNPQLHETLLTHLEQLQKHQGNTIEIRYTTHEQFKQQTAESQAVIRSGECSPYANIILCAGVTF</sequence>
<reference key="1">
    <citation type="journal article" date="2005" name="Nucleic Acids Res.">
        <title>Genome dynamics and diversity of Shigella species, the etiologic agents of bacillary dysentery.</title>
        <authorList>
            <person name="Yang F."/>
            <person name="Yang J."/>
            <person name="Zhang X."/>
            <person name="Chen L."/>
            <person name="Jiang Y."/>
            <person name="Yan Y."/>
            <person name="Tang X."/>
            <person name="Wang J."/>
            <person name="Xiong Z."/>
            <person name="Dong J."/>
            <person name="Xue Y."/>
            <person name="Zhu Y."/>
            <person name="Xu X."/>
            <person name="Sun L."/>
            <person name="Chen S."/>
            <person name="Nie H."/>
            <person name="Peng J."/>
            <person name="Xu J."/>
            <person name="Wang Y."/>
            <person name="Yuan Z."/>
            <person name="Wen Y."/>
            <person name="Yao Z."/>
            <person name="Shen Y."/>
            <person name="Qiang B."/>
            <person name="Hou Y."/>
            <person name="Yu J."/>
            <person name="Jin Q."/>
        </authorList>
    </citation>
    <scope>NUCLEOTIDE SEQUENCE [LARGE SCALE GENOMIC DNA]</scope>
    <source>
        <strain>Ss046</strain>
    </source>
</reference>
<keyword id="KW-0119">Carbohydrate metabolism</keyword>
<keyword id="KW-0963">Cytoplasm</keyword>
<keyword id="KW-0413">Isomerase</keyword>
<keyword id="KW-1185">Reference proteome</keyword>
<feature type="chain" id="PRO_0000346260" description="D-ribose pyranase">
    <location>
        <begin position="1"/>
        <end position="139"/>
    </location>
</feature>
<feature type="active site" description="Proton donor" evidence="1">
    <location>
        <position position="20"/>
    </location>
</feature>
<feature type="binding site" evidence="1">
    <location>
        <position position="28"/>
    </location>
    <ligand>
        <name>substrate</name>
    </ligand>
</feature>
<feature type="binding site" evidence="1">
    <location>
        <position position="106"/>
    </location>
    <ligand>
        <name>substrate</name>
    </ligand>
</feature>
<feature type="binding site" evidence="1">
    <location>
        <begin position="128"/>
        <end position="130"/>
    </location>
    <ligand>
        <name>substrate</name>
    </ligand>
</feature>
<comment type="function">
    <text evidence="1">Catalyzes the interconversion of beta-pyran and beta-furan forms of D-ribose.</text>
</comment>
<comment type="catalytic activity">
    <reaction evidence="1">
        <text>beta-D-ribopyranose = beta-D-ribofuranose</text>
        <dbReference type="Rhea" id="RHEA:25432"/>
        <dbReference type="ChEBI" id="CHEBI:27476"/>
        <dbReference type="ChEBI" id="CHEBI:47002"/>
        <dbReference type="EC" id="5.4.99.62"/>
    </reaction>
</comment>
<comment type="pathway">
    <text evidence="1">Carbohydrate metabolism; D-ribose degradation; D-ribose 5-phosphate from beta-D-ribopyranose: step 1/2.</text>
</comment>
<comment type="subunit">
    <text evidence="1">Homodecamer.</text>
</comment>
<comment type="subcellular location">
    <subcellularLocation>
        <location evidence="1">Cytoplasm</location>
    </subcellularLocation>
</comment>
<comment type="similarity">
    <text evidence="1">Belongs to the RbsD / FucU family. RbsD subfamily.</text>
</comment>
<comment type="sequence caution" evidence="2">
    <conflict type="erroneous initiation">
        <sequence resource="EMBL-CDS" id="AAZ90453"/>
    </conflict>
</comment>
<accession>Q3YVK9</accession>
<evidence type="ECO:0000255" key="1">
    <source>
        <dbReference type="HAMAP-Rule" id="MF_01661"/>
    </source>
</evidence>
<evidence type="ECO:0000305" key="2"/>